<gene>
    <name evidence="1" type="primary">frr</name>
    <name type="ordered locus">GTNG_1106</name>
</gene>
<keyword id="KW-0963">Cytoplasm</keyword>
<keyword id="KW-0648">Protein biosynthesis</keyword>
<feature type="chain" id="PRO_1000003171" description="Ribosome-recycling factor">
    <location>
        <begin position="1"/>
        <end position="185"/>
    </location>
</feature>
<organism>
    <name type="scientific">Geobacillus thermodenitrificans (strain NG80-2)</name>
    <dbReference type="NCBI Taxonomy" id="420246"/>
    <lineage>
        <taxon>Bacteria</taxon>
        <taxon>Bacillati</taxon>
        <taxon>Bacillota</taxon>
        <taxon>Bacilli</taxon>
        <taxon>Bacillales</taxon>
        <taxon>Anoxybacillaceae</taxon>
        <taxon>Geobacillus</taxon>
    </lineage>
</organism>
<evidence type="ECO:0000255" key="1">
    <source>
        <dbReference type="HAMAP-Rule" id="MF_00040"/>
    </source>
</evidence>
<dbReference type="EMBL" id="CP000557">
    <property type="protein sequence ID" value="ABO66480.1"/>
    <property type="molecule type" value="Genomic_DNA"/>
</dbReference>
<dbReference type="RefSeq" id="WP_008878556.1">
    <property type="nucleotide sequence ID" value="NC_009328.1"/>
</dbReference>
<dbReference type="SMR" id="A4IMC6"/>
<dbReference type="GeneID" id="87621302"/>
<dbReference type="KEGG" id="gtn:GTNG_1106"/>
<dbReference type="eggNOG" id="COG0233">
    <property type="taxonomic scope" value="Bacteria"/>
</dbReference>
<dbReference type="HOGENOM" id="CLU_073981_2_0_9"/>
<dbReference type="Proteomes" id="UP000001578">
    <property type="component" value="Chromosome"/>
</dbReference>
<dbReference type="GO" id="GO:0005737">
    <property type="term" value="C:cytoplasm"/>
    <property type="evidence" value="ECO:0007669"/>
    <property type="project" value="UniProtKB-SubCell"/>
</dbReference>
<dbReference type="GO" id="GO:0043023">
    <property type="term" value="F:ribosomal large subunit binding"/>
    <property type="evidence" value="ECO:0007669"/>
    <property type="project" value="TreeGrafter"/>
</dbReference>
<dbReference type="GO" id="GO:0006415">
    <property type="term" value="P:translational termination"/>
    <property type="evidence" value="ECO:0007669"/>
    <property type="project" value="UniProtKB-UniRule"/>
</dbReference>
<dbReference type="CDD" id="cd00520">
    <property type="entry name" value="RRF"/>
    <property type="match status" value="1"/>
</dbReference>
<dbReference type="FunFam" id="1.10.132.20:FF:000001">
    <property type="entry name" value="Ribosome-recycling factor"/>
    <property type="match status" value="1"/>
</dbReference>
<dbReference type="FunFam" id="3.30.1360.40:FF:000001">
    <property type="entry name" value="Ribosome-recycling factor"/>
    <property type="match status" value="1"/>
</dbReference>
<dbReference type="Gene3D" id="3.30.1360.40">
    <property type="match status" value="1"/>
</dbReference>
<dbReference type="Gene3D" id="1.10.132.20">
    <property type="entry name" value="Ribosome-recycling factor"/>
    <property type="match status" value="1"/>
</dbReference>
<dbReference type="HAMAP" id="MF_00040">
    <property type="entry name" value="RRF"/>
    <property type="match status" value="1"/>
</dbReference>
<dbReference type="InterPro" id="IPR002661">
    <property type="entry name" value="Ribosome_recyc_fac"/>
</dbReference>
<dbReference type="InterPro" id="IPR023584">
    <property type="entry name" value="Ribosome_recyc_fac_dom"/>
</dbReference>
<dbReference type="InterPro" id="IPR036191">
    <property type="entry name" value="RRF_sf"/>
</dbReference>
<dbReference type="NCBIfam" id="TIGR00496">
    <property type="entry name" value="frr"/>
    <property type="match status" value="1"/>
</dbReference>
<dbReference type="PANTHER" id="PTHR20982:SF3">
    <property type="entry name" value="MITOCHONDRIAL RIBOSOME RECYCLING FACTOR PSEUDO 1"/>
    <property type="match status" value="1"/>
</dbReference>
<dbReference type="PANTHER" id="PTHR20982">
    <property type="entry name" value="RIBOSOME RECYCLING FACTOR"/>
    <property type="match status" value="1"/>
</dbReference>
<dbReference type="Pfam" id="PF01765">
    <property type="entry name" value="RRF"/>
    <property type="match status" value="1"/>
</dbReference>
<dbReference type="SUPFAM" id="SSF55194">
    <property type="entry name" value="Ribosome recycling factor, RRF"/>
    <property type="match status" value="1"/>
</dbReference>
<comment type="function">
    <text evidence="1">Responsible for the release of ribosomes from messenger RNA at the termination of protein biosynthesis. May increase the efficiency of translation by recycling ribosomes from one round of translation to another.</text>
</comment>
<comment type="subcellular location">
    <subcellularLocation>
        <location evidence="1">Cytoplasm</location>
    </subcellularLocation>
</comment>
<comment type="similarity">
    <text evidence="1">Belongs to the RRF family.</text>
</comment>
<reference key="1">
    <citation type="journal article" date="2007" name="Proc. Natl. Acad. Sci. U.S.A.">
        <title>Genome and proteome of long-chain alkane degrading Geobacillus thermodenitrificans NG80-2 isolated from a deep-subsurface oil reservoir.</title>
        <authorList>
            <person name="Feng L."/>
            <person name="Wang W."/>
            <person name="Cheng J."/>
            <person name="Ren Y."/>
            <person name="Zhao G."/>
            <person name="Gao C."/>
            <person name="Tang Y."/>
            <person name="Liu X."/>
            <person name="Han W."/>
            <person name="Peng X."/>
            <person name="Liu R."/>
            <person name="Wang L."/>
        </authorList>
    </citation>
    <scope>NUCLEOTIDE SEQUENCE [LARGE SCALE GENOMIC DNA]</scope>
    <source>
        <strain>NG80-2</strain>
    </source>
</reference>
<protein>
    <recommendedName>
        <fullName evidence="1">Ribosome-recycling factor</fullName>
        <shortName evidence="1">RRF</shortName>
    </recommendedName>
    <alternativeName>
        <fullName evidence="1">Ribosome-releasing factor</fullName>
    </alternativeName>
</protein>
<accession>A4IMC6</accession>
<sequence>MAKQVIQQAKEKMDKAVQAFSRELATVRAGRANAGLLEKVTVDYYGVATPINQLATISVPEARMLVIQPYDKSVIKEMEKAILASDLGVTPSNDGSVIRLVIPPLTEERRRELAKLVKKYSEEAKVAVRNIRRDANDELKKLEKNSEITEDELRSYTDEVQKLTDSHIAKIDAITKEKEKEVMEV</sequence>
<name>RRF_GEOTN</name>
<proteinExistence type="inferred from homology"/>